<feature type="transit peptide" description="Mitochondrion" evidence="1">
    <location>
        <begin position="1"/>
        <end status="unknown"/>
    </location>
</feature>
<feature type="chain" id="PRO_0000030649" description="Small ribosomal subunit protein uS9m">
    <location>
        <begin status="unknown"/>
        <end position="292"/>
    </location>
</feature>
<feature type="region of interest" description="Disordered" evidence="2">
    <location>
        <begin position="273"/>
        <end position="292"/>
    </location>
</feature>
<keyword id="KW-0496">Mitochondrion</keyword>
<keyword id="KW-0687">Ribonucleoprotein</keyword>
<keyword id="KW-0689">Ribosomal protein</keyword>
<keyword id="KW-0809">Transit peptide</keyword>
<comment type="subcellular location">
    <subcellularLocation>
        <location evidence="3">Mitochondrion</location>
    </subcellularLocation>
</comment>
<comment type="similarity">
    <text evidence="3">Belongs to the universal ribosomal protein uS9 family.</text>
</comment>
<name>RT09_KLUMA</name>
<proteinExistence type="inferred from homology"/>
<evidence type="ECO:0000255" key="1"/>
<evidence type="ECO:0000256" key="2">
    <source>
        <dbReference type="SAM" id="MobiDB-lite"/>
    </source>
</evidence>
<evidence type="ECO:0000305" key="3"/>
<organism>
    <name type="scientific">Kluyveromyces marxianus</name>
    <name type="common">Yeast</name>
    <name type="synonym">Candida kefyr</name>
    <dbReference type="NCBI Taxonomy" id="4911"/>
    <lineage>
        <taxon>Eukaryota</taxon>
        <taxon>Fungi</taxon>
        <taxon>Dikarya</taxon>
        <taxon>Ascomycota</taxon>
        <taxon>Saccharomycotina</taxon>
        <taxon>Saccharomycetes</taxon>
        <taxon>Saccharomycetales</taxon>
        <taxon>Saccharomycetaceae</taxon>
        <taxon>Kluyveromyces</taxon>
    </lineage>
</organism>
<protein>
    <recommendedName>
        <fullName evidence="3">Small ribosomal subunit protein uS9m</fullName>
    </recommendedName>
    <alternativeName>
        <fullName>37S ribosomal protein S9, mitochondrial</fullName>
    </alternativeName>
</protein>
<accession>Q9P4C1</accession>
<dbReference type="EMBL" id="AF225206">
    <property type="protein sequence ID" value="AAF91236.1"/>
    <property type="molecule type" value="Genomic_DNA"/>
</dbReference>
<dbReference type="SMR" id="Q9P4C1"/>
<dbReference type="VEuPathDB" id="FungiDB:KLMA_40221"/>
<dbReference type="GO" id="GO:0005763">
    <property type="term" value="C:mitochondrial small ribosomal subunit"/>
    <property type="evidence" value="ECO:0007669"/>
    <property type="project" value="TreeGrafter"/>
</dbReference>
<dbReference type="GO" id="GO:0003723">
    <property type="term" value="F:RNA binding"/>
    <property type="evidence" value="ECO:0007669"/>
    <property type="project" value="TreeGrafter"/>
</dbReference>
<dbReference type="GO" id="GO:0003735">
    <property type="term" value="F:structural constituent of ribosome"/>
    <property type="evidence" value="ECO:0007669"/>
    <property type="project" value="InterPro"/>
</dbReference>
<dbReference type="GO" id="GO:0006412">
    <property type="term" value="P:translation"/>
    <property type="evidence" value="ECO:0007669"/>
    <property type="project" value="InterPro"/>
</dbReference>
<dbReference type="FunFam" id="3.30.230.10:FF:000001">
    <property type="entry name" value="30S ribosomal protein S9"/>
    <property type="match status" value="1"/>
</dbReference>
<dbReference type="Gene3D" id="3.30.230.10">
    <property type="match status" value="1"/>
</dbReference>
<dbReference type="InterPro" id="IPR020568">
    <property type="entry name" value="Ribosomal_Su5_D2-typ_SF"/>
</dbReference>
<dbReference type="InterPro" id="IPR000754">
    <property type="entry name" value="Ribosomal_uS9"/>
</dbReference>
<dbReference type="InterPro" id="IPR023035">
    <property type="entry name" value="Ribosomal_uS9_bac/plastid"/>
</dbReference>
<dbReference type="InterPro" id="IPR020574">
    <property type="entry name" value="Ribosomal_uS9_CS"/>
</dbReference>
<dbReference type="InterPro" id="IPR014721">
    <property type="entry name" value="Ribsml_uS5_D2-typ_fold_subgr"/>
</dbReference>
<dbReference type="NCBIfam" id="NF001099">
    <property type="entry name" value="PRK00132.1"/>
    <property type="match status" value="1"/>
</dbReference>
<dbReference type="PANTHER" id="PTHR21569">
    <property type="entry name" value="RIBOSOMAL PROTEIN S9"/>
    <property type="match status" value="1"/>
</dbReference>
<dbReference type="PANTHER" id="PTHR21569:SF1">
    <property type="entry name" value="SMALL RIBOSOMAL SUBUNIT PROTEIN US9M"/>
    <property type="match status" value="1"/>
</dbReference>
<dbReference type="Pfam" id="PF00380">
    <property type="entry name" value="Ribosomal_S9"/>
    <property type="match status" value="1"/>
</dbReference>
<dbReference type="SUPFAM" id="SSF54211">
    <property type="entry name" value="Ribosomal protein S5 domain 2-like"/>
    <property type="match status" value="1"/>
</dbReference>
<dbReference type="PROSITE" id="PS00360">
    <property type="entry name" value="RIBOSOMAL_S9"/>
    <property type="match status" value="1"/>
</dbReference>
<reference key="1">
    <citation type="journal article" date="2000" name="Gene">
        <title>Kluyveromyces marxianus exhibits an ancestral Saccharomyces cerevisiae genome organization downstream of ADH2.</title>
        <authorList>
            <person name="Ladriere J.-M."/>
            <person name="Georis I."/>
            <person name="Guerineau M."/>
            <person name="Vandenhaute J."/>
        </authorList>
    </citation>
    <scope>NUCLEOTIDE SEQUENCE [GENOMIC DNA]</scope>
    <source>
        <strain>ATCC 12424 / NRRL Y-610</strain>
    </source>
</reference>
<gene>
    <name type="primary">MRPS9</name>
</gene>
<sequence>MFSRLSAVSLRQGFVVQRRLFSYARPLLNSGSQATANQNTARETNNEYQYSGTRIVPKLSTFYSANPHHEAHIDNLEALMRKYIKYPTVQVEERPMWLSLQEYALIGGGSRLKSTQYKQLLFLLNRLNSIDPQLMVPEISNTLAKYHKKTKLQPQRDTLKELDEFGRSLAIGRRKTATAKVYVVRGEGQILVNDRALNDYFVKMKDRESIMYPLKAIDSVGKYNIFAMVSGGGTTAQADAIMHAIGKALVTFNPLLKTRLHRSGVLTRDYRHVERKKPGKRKARKMPTWVKR</sequence>